<protein>
    <recommendedName>
        <fullName>Bowman-Birk type proteinase inhibitor 1</fullName>
    </recommendedName>
    <alternativeName>
        <fullName evidence="4">LSI-1</fullName>
    </alternativeName>
</protein>
<dbReference type="SMR" id="P86701"/>
<dbReference type="GO" id="GO:0005576">
    <property type="term" value="C:extracellular region"/>
    <property type="evidence" value="ECO:0007669"/>
    <property type="project" value="InterPro"/>
</dbReference>
<dbReference type="GO" id="GO:0004867">
    <property type="term" value="F:serine-type endopeptidase inhibitor activity"/>
    <property type="evidence" value="ECO:0000314"/>
    <property type="project" value="UniProtKB"/>
</dbReference>
<dbReference type="GO" id="GO:0010951">
    <property type="term" value="P:negative regulation of endopeptidase activity"/>
    <property type="evidence" value="ECO:0000314"/>
    <property type="project" value="UniProtKB"/>
</dbReference>
<dbReference type="CDD" id="cd00023">
    <property type="entry name" value="BBI"/>
    <property type="match status" value="1"/>
</dbReference>
<dbReference type="Gene3D" id="2.10.69.10">
    <property type="entry name" value="Cysteine Protease (Bromelain) Inhibitor, subunit H"/>
    <property type="match status" value="1"/>
</dbReference>
<dbReference type="InterPro" id="IPR035995">
    <property type="entry name" value="Bowman-Birk_prot_inh"/>
</dbReference>
<dbReference type="InterPro" id="IPR000877">
    <property type="entry name" value="Prot_inh_BBI"/>
</dbReference>
<dbReference type="Pfam" id="PF00228">
    <property type="entry name" value="Bowman-Birk_leg"/>
    <property type="match status" value="2"/>
</dbReference>
<dbReference type="SMART" id="SM00269">
    <property type="entry name" value="BowB"/>
    <property type="match status" value="1"/>
</dbReference>
<dbReference type="SUPFAM" id="SSF57247">
    <property type="entry name" value="Bowman-Birk inhibitor, BBI"/>
    <property type="match status" value="1"/>
</dbReference>
<dbReference type="PROSITE" id="PS00281">
    <property type="entry name" value="BOWMAN_BIRK"/>
    <property type="match status" value="1"/>
</dbReference>
<name>IBB1_LATSA</name>
<keyword id="KW-0903">Direct protein sequencing</keyword>
<keyword id="KW-1015">Disulfide bond</keyword>
<keyword id="KW-0646">Protease inhibitor</keyword>
<keyword id="KW-0722">Serine protease inhibitor</keyword>
<reference evidence="5" key="1">
    <citation type="journal article" date="2011" name="Mol. Biosyst.">
        <title>A Bowman-Birk inhibitor with anti-elastase activity from Lathyrus sativus L. seeds.</title>
        <authorList>
            <person name="Rocco M."/>
            <person name="Malorni L."/>
            <person name="Chambery A."/>
            <person name="Poerio E."/>
            <person name="Parente A."/>
            <person name="Di Maro A."/>
        </authorList>
    </citation>
    <scope>PROTEIN SEQUENCE</scope>
    <scope>FUNCTION</scope>
    <scope>SUBUNIT</scope>
    <scope>MASS SPECTROMETRY</scope>
    <source>
        <tissue evidence="3">Seed</tissue>
    </source>
</reference>
<sequence length="53" mass="5751">GDDVKSACCDTCLCTKSNPPICRCVDIRETCHSACNSCVCTASIPPQCRFCYK</sequence>
<proteinExistence type="evidence at protein level"/>
<accession>P86701</accession>
<evidence type="ECO:0000250" key="1">
    <source>
        <dbReference type="UniProtKB" id="P01055"/>
    </source>
</evidence>
<evidence type="ECO:0000255" key="2"/>
<evidence type="ECO:0000269" key="3">
    <source>
    </source>
</evidence>
<evidence type="ECO:0000303" key="4">
    <source>
    </source>
</evidence>
<evidence type="ECO:0000305" key="5"/>
<organism>
    <name type="scientific">Lathyrus sativus</name>
    <name type="common">White vetchling</name>
    <dbReference type="NCBI Taxonomy" id="3860"/>
    <lineage>
        <taxon>Eukaryota</taxon>
        <taxon>Viridiplantae</taxon>
        <taxon>Streptophyta</taxon>
        <taxon>Embryophyta</taxon>
        <taxon>Tracheophyta</taxon>
        <taxon>Spermatophyta</taxon>
        <taxon>Magnoliopsida</taxon>
        <taxon>eudicotyledons</taxon>
        <taxon>Gunneridae</taxon>
        <taxon>Pentapetalae</taxon>
        <taxon>rosids</taxon>
        <taxon>fabids</taxon>
        <taxon>Fabales</taxon>
        <taxon>Fabaceae</taxon>
        <taxon>Papilionoideae</taxon>
        <taxon>50 kb inversion clade</taxon>
        <taxon>NPAAA clade</taxon>
        <taxon>Hologalegina</taxon>
        <taxon>IRL clade</taxon>
        <taxon>Fabeae</taxon>
        <taxon>Lathyrus</taxon>
    </lineage>
</organism>
<comment type="function">
    <text evidence="3">Inhibits trypsin (IC(50)=6.20 nM), neutrophil elastase (ELANE) and, to a lesser extent, alpha-chymotrypsin (IC(50)=3.44 uM).</text>
</comment>
<comment type="subunit">
    <text evidence="3 5">Dimer.</text>
</comment>
<comment type="mass spectrometry" mass="7914.4" method="Electrospray" evidence="3"/>
<comment type="similarity">
    <text evidence="2">Belongs to the Bowman-Birk serine protease inhibitor family.</text>
</comment>
<feature type="chain" id="PRO_0000419008" description="Bowman-Birk type proteinase inhibitor 1">
    <location>
        <begin position="1"/>
        <end position="53" status="greater than"/>
    </location>
</feature>
<feature type="site" description="Reactive bond for trypsin" evidence="1">
    <location>
        <begin position="16"/>
        <end position="17"/>
    </location>
</feature>
<feature type="disulfide bond" evidence="1">
    <location>
        <begin position="8"/>
        <end status="unknown"/>
    </location>
</feature>
<feature type="disulfide bond" evidence="1">
    <location>
        <begin position="9"/>
        <end position="24"/>
    </location>
</feature>
<feature type="disulfide bond" evidence="1">
    <location>
        <begin position="12"/>
        <end position="51"/>
    </location>
</feature>
<feature type="disulfide bond" evidence="1">
    <location>
        <begin position="14"/>
        <end position="22"/>
    </location>
</feature>
<feature type="disulfide bond" evidence="1">
    <location>
        <begin position="31"/>
        <end position="38"/>
    </location>
</feature>
<feature type="disulfide bond" evidence="1">
    <location>
        <begin position="40"/>
        <end position="48"/>
    </location>
</feature>
<feature type="non-consecutive residues" evidence="4">
    <location>
        <begin position="49"/>
        <end position="50"/>
    </location>
</feature>
<feature type="non-terminal residue" evidence="4">
    <location>
        <position position="53"/>
    </location>
</feature>